<accession>D5KXH3</accession>
<name>TU81_GEMSP</name>
<reference key="1">
    <citation type="submission" date="2010-02" db="EMBL/GenBank/DDBJ databases">
        <title>Cysteine-rich toxin gene families from Gemmula speciosa (Reeve, 1843).</title>
        <authorList>
            <person name="Uichanco J.A.V."/>
            <person name="Planta J.R.G."/>
            <person name="Santos A.D."/>
            <person name="Concepcion G.P."/>
        </authorList>
    </citation>
    <scope>NUCLEOTIDE SEQUENCE [MRNA]</scope>
    <source>
        <tissue>Venom duct</tissue>
    </source>
</reference>
<protein>
    <recommendedName>
        <fullName>Turripeptide VIII-01</fullName>
    </recommendedName>
</protein>
<organism>
    <name type="scientific">Gemmula speciosa</name>
    <name type="common">Splendid gem-turris</name>
    <name type="synonym">Pleurotoma speciosa</name>
    <dbReference type="NCBI Taxonomy" id="439592"/>
    <lineage>
        <taxon>Eukaryota</taxon>
        <taxon>Metazoa</taxon>
        <taxon>Spiralia</taxon>
        <taxon>Lophotrochozoa</taxon>
        <taxon>Mollusca</taxon>
        <taxon>Gastropoda</taxon>
        <taxon>Caenogastropoda</taxon>
        <taxon>Neogastropoda</taxon>
        <taxon>Conoidea</taxon>
        <taxon>Turridae</taxon>
        <taxon>Gemmula</taxon>
    </lineage>
</organism>
<feature type="signal peptide" evidence="2">
    <location>
        <begin position="1"/>
        <end position="23"/>
    </location>
</feature>
<feature type="propeptide" id="PRO_0000415061" evidence="1">
    <location>
        <begin position="24"/>
        <end position="32"/>
    </location>
</feature>
<feature type="peptide" id="PRO_0000415062" description="Turripeptide VIII-01">
    <location>
        <begin position="34"/>
        <end position="143"/>
    </location>
</feature>
<comment type="subcellular location">
    <subcellularLocation>
        <location evidence="1">Secreted</location>
    </subcellularLocation>
</comment>
<comment type="tissue specificity">
    <text>Expressed by the venom duct.</text>
</comment>
<comment type="domain">
    <text>The cysteine framework is VIII (C-C-C-C-C-C-C-C-C-C).</text>
</comment>
<comment type="PTM">
    <text evidence="1">Contains 4 disulfide bonds.</text>
</comment>
<evidence type="ECO:0000250" key="1"/>
<evidence type="ECO:0000255" key="2"/>
<proteinExistence type="evidence at transcript level"/>
<dbReference type="EMBL" id="GU721054">
    <property type="protein sequence ID" value="ADE28871.1"/>
    <property type="molecule type" value="mRNA"/>
</dbReference>
<dbReference type="SMR" id="D5KXH3"/>
<dbReference type="GO" id="GO:0005576">
    <property type="term" value="C:extracellular region"/>
    <property type="evidence" value="ECO:0007669"/>
    <property type="project" value="UniProtKB-SubCell"/>
</dbReference>
<dbReference type="GO" id="GO:0090729">
    <property type="term" value="F:toxin activity"/>
    <property type="evidence" value="ECO:0007669"/>
    <property type="project" value="UniProtKB-KW"/>
</dbReference>
<keyword id="KW-1015">Disulfide bond</keyword>
<keyword id="KW-0528">Neurotoxin</keyword>
<keyword id="KW-0964">Secreted</keyword>
<keyword id="KW-0732">Signal</keyword>
<keyword id="KW-0800">Toxin</keyword>
<sequence>MALSLDILMSVTMVTAVLTTVNAEYKDSRLDSRQLPANFPMCQHRQLCAVASRATNNLRVYCRCSDDTICPISDDHHAIYPNTAYICQHVNSYLDPCVDITIPAIVTTSEIYVINCRCDTYQWPPVGGKVYCESLSSRMFKLF</sequence>